<gene>
    <name type="primary">mpt53</name>
    <name type="synonym">mpb53</name>
    <name type="ordered locus">MT2946</name>
</gene>
<protein>
    <recommendedName>
        <fullName>Soluble secreted antigen MPT53</fullName>
    </recommendedName>
</protein>
<proteinExistence type="inferred from homology"/>
<feature type="signal peptide" evidence="1">
    <location>
        <begin position="1"/>
        <end position="38"/>
    </location>
</feature>
<feature type="chain" id="PRO_0000428416" description="Soluble secreted antigen MPT53">
    <location>
        <begin position="39"/>
        <end position="173"/>
    </location>
</feature>
<feature type="disulfide bond" description="Redox-active" evidence="2">
    <location>
        <begin position="73"/>
        <end position="76"/>
    </location>
</feature>
<comment type="function">
    <text evidence="1">Disulfide oxidoreductase that catalyzes the oxidation of reduced, unfolded secreted proteins to form disulfide bonds. Despite a weak homology to thioredoxin this cannot serve as a substrate for thioredoxin reductase (By similarity).</text>
</comment>
<comment type="subcellular location">
    <subcellularLocation>
        <location evidence="1">Secreted</location>
    </subcellularLocation>
</comment>
<comment type="similarity">
    <text evidence="3">Belongs to the thioredoxin family.</text>
</comment>
<comment type="sequence caution" evidence="3">
    <conflict type="erroneous initiation">
        <sequence resource="EMBL-CDS" id="AAK47271"/>
    </conflict>
</comment>
<name>MPT53_MYCTO</name>
<dbReference type="EMBL" id="AE000516">
    <property type="protein sequence ID" value="AAK47271.1"/>
    <property type="status" value="ALT_INIT"/>
    <property type="molecule type" value="Genomic_DNA"/>
</dbReference>
<dbReference type="PIR" id="A70924">
    <property type="entry name" value="A70924"/>
</dbReference>
<dbReference type="RefSeq" id="WP_003414654.1">
    <property type="nucleotide sequence ID" value="NZ_KK341227.1"/>
</dbReference>
<dbReference type="SMR" id="P9WG64"/>
<dbReference type="KEGG" id="mtc:MT2946"/>
<dbReference type="PATRIC" id="fig|83331.31.peg.3183"/>
<dbReference type="HOGENOM" id="CLU_042529_13_1_11"/>
<dbReference type="Proteomes" id="UP000001020">
    <property type="component" value="Chromosome"/>
</dbReference>
<dbReference type="GO" id="GO:0005576">
    <property type="term" value="C:extracellular region"/>
    <property type="evidence" value="ECO:0007669"/>
    <property type="project" value="UniProtKB-SubCell"/>
</dbReference>
<dbReference type="GO" id="GO:0016209">
    <property type="term" value="F:antioxidant activity"/>
    <property type="evidence" value="ECO:0007669"/>
    <property type="project" value="InterPro"/>
</dbReference>
<dbReference type="GO" id="GO:0016491">
    <property type="term" value="F:oxidoreductase activity"/>
    <property type="evidence" value="ECO:0007669"/>
    <property type="project" value="InterPro"/>
</dbReference>
<dbReference type="CDD" id="cd03011">
    <property type="entry name" value="TlpA_like_ScsD_MtbDsbE"/>
    <property type="match status" value="1"/>
</dbReference>
<dbReference type="FunFam" id="3.40.30.10:FF:000238">
    <property type="entry name" value="Soluble secreted antigen Mpt53"/>
    <property type="match status" value="1"/>
</dbReference>
<dbReference type="Gene3D" id="3.40.30.10">
    <property type="entry name" value="Glutaredoxin"/>
    <property type="match status" value="1"/>
</dbReference>
<dbReference type="InterPro" id="IPR000866">
    <property type="entry name" value="AhpC/TSA"/>
</dbReference>
<dbReference type="InterPro" id="IPR036249">
    <property type="entry name" value="Thioredoxin-like_sf"/>
</dbReference>
<dbReference type="InterPro" id="IPR013766">
    <property type="entry name" value="Thioredoxin_domain"/>
</dbReference>
<dbReference type="InterPro" id="IPR050553">
    <property type="entry name" value="Thioredoxin_ResA/DsbE_sf"/>
</dbReference>
<dbReference type="PANTHER" id="PTHR42852">
    <property type="entry name" value="THIOL:DISULFIDE INTERCHANGE PROTEIN DSBE"/>
    <property type="match status" value="1"/>
</dbReference>
<dbReference type="PANTHER" id="PTHR42852:SF17">
    <property type="entry name" value="THIOREDOXIN-LIKE PROTEIN HI_1115"/>
    <property type="match status" value="1"/>
</dbReference>
<dbReference type="Pfam" id="PF00578">
    <property type="entry name" value="AhpC-TSA"/>
    <property type="match status" value="1"/>
</dbReference>
<dbReference type="SUPFAM" id="SSF52833">
    <property type="entry name" value="Thioredoxin-like"/>
    <property type="match status" value="1"/>
</dbReference>
<dbReference type="PROSITE" id="PS51352">
    <property type="entry name" value="THIOREDOXIN_2"/>
    <property type="match status" value="1"/>
</dbReference>
<keyword id="KW-1015">Disulfide bond</keyword>
<keyword id="KW-0676">Redox-active center</keyword>
<keyword id="KW-1185">Reference proteome</keyword>
<keyword id="KW-0964">Secreted</keyword>
<keyword id="KW-0732">Signal</keyword>
<organism>
    <name type="scientific">Mycobacterium tuberculosis (strain CDC 1551 / Oshkosh)</name>
    <dbReference type="NCBI Taxonomy" id="83331"/>
    <lineage>
        <taxon>Bacteria</taxon>
        <taxon>Bacillati</taxon>
        <taxon>Actinomycetota</taxon>
        <taxon>Actinomycetes</taxon>
        <taxon>Mycobacteriales</taxon>
        <taxon>Mycobacteriaceae</taxon>
        <taxon>Mycobacterium</taxon>
        <taxon>Mycobacterium tuberculosis complex</taxon>
    </lineage>
</organism>
<reference key="1">
    <citation type="journal article" date="2002" name="J. Bacteriol.">
        <title>Whole-genome comparison of Mycobacterium tuberculosis clinical and laboratory strains.</title>
        <authorList>
            <person name="Fleischmann R.D."/>
            <person name="Alland D."/>
            <person name="Eisen J.A."/>
            <person name="Carpenter L."/>
            <person name="White O."/>
            <person name="Peterson J.D."/>
            <person name="DeBoy R.T."/>
            <person name="Dodson R.J."/>
            <person name="Gwinn M.L."/>
            <person name="Haft D.H."/>
            <person name="Hickey E.K."/>
            <person name="Kolonay J.F."/>
            <person name="Nelson W.C."/>
            <person name="Umayam L.A."/>
            <person name="Ermolaeva M.D."/>
            <person name="Salzberg S.L."/>
            <person name="Delcher A."/>
            <person name="Utterback T.R."/>
            <person name="Weidman J.F."/>
            <person name="Khouri H.M."/>
            <person name="Gill J."/>
            <person name="Mikula A."/>
            <person name="Bishai W."/>
            <person name="Jacobs W.R. Jr."/>
            <person name="Venter J.C."/>
            <person name="Fraser C.M."/>
        </authorList>
    </citation>
    <scope>NUCLEOTIDE SEQUENCE [LARGE SCALE GENOMIC DNA]</scope>
    <source>
        <strain>CDC 1551 / Oshkosh</strain>
    </source>
</reference>
<accession>P9WG64</accession>
<accession>L0TAX0</accession>
<accession>P0A618</accession>
<accession>Q10804</accession>
<evidence type="ECO:0000250" key="1"/>
<evidence type="ECO:0000255" key="2">
    <source>
        <dbReference type="PROSITE-ProRule" id="PRU00691"/>
    </source>
</evidence>
<evidence type="ECO:0000305" key="3"/>
<sequence length="173" mass="18383">MSLRLVSPIKAFADGIVAVAIAVVLMFGLANTPRAVAADERLQFTATTLSGAPFDGASLQGKPAVLWFWTPWCPFCNAEAPSLSQVAAANPAVTFVGIATRADVGAMQSFVSKYNLNFTNLNDADGVIWARYNVPWQPAFVFYRADGTSTFVNNPTAAMSQDELSGRVAALTS</sequence>